<protein>
    <recommendedName>
        <fullName evidence="1">tRNA uridine 5-carboxymethylaminomethyl modification enzyme MnmG</fullName>
    </recommendedName>
    <alternativeName>
        <fullName evidence="1">Glucose-inhibited division protein A</fullName>
    </alternativeName>
</protein>
<gene>
    <name evidence="1" type="primary">mnmG</name>
    <name evidence="1" type="synonym">gidA</name>
    <name type="ordered locus">HSM_1858</name>
</gene>
<reference key="1">
    <citation type="submission" date="2008-02" db="EMBL/GenBank/DDBJ databases">
        <title>Complete sequence of Haemophilus somnus 2336.</title>
        <authorList>
            <consortium name="US DOE Joint Genome Institute"/>
            <person name="Siddaramappa S."/>
            <person name="Duncan A.J."/>
            <person name="Challacombe J.F."/>
            <person name="Rainey D."/>
            <person name="Gillaspy A.F."/>
            <person name="Carson M."/>
            <person name="Gipson J."/>
            <person name="Gipson M."/>
            <person name="Bruce D."/>
            <person name="Detter J.C."/>
            <person name="Han C.S."/>
            <person name="Land M."/>
            <person name="Tapia R."/>
            <person name="Thompson L.S."/>
            <person name="Orvis J."/>
            <person name="Zaitshik J."/>
            <person name="Barnes G."/>
            <person name="Brettin T.S."/>
            <person name="Dyer D.W."/>
            <person name="Inzana T.J."/>
        </authorList>
    </citation>
    <scope>NUCLEOTIDE SEQUENCE [LARGE SCALE GENOMIC DNA]</scope>
    <source>
        <strain>2336</strain>
    </source>
</reference>
<organism>
    <name type="scientific">Histophilus somni (strain 2336)</name>
    <name type="common">Haemophilus somnus</name>
    <dbReference type="NCBI Taxonomy" id="228400"/>
    <lineage>
        <taxon>Bacteria</taxon>
        <taxon>Pseudomonadati</taxon>
        <taxon>Pseudomonadota</taxon>
        <taxon>Gammaproteobacteria</taxon>
        <taxon>Pasteurellales</taxon>
        <taxon>Pasteurellaceae</taxon>
        <taxon>Histophilus</taxon>
    </lineage>
</organism>
<comment type="function">
    <text evidence="1">NAD-binding protein involved in the addition of a carboxymethylaminomethyl (cmnm) group at the wobble position (U34) of certain tRNAs, forming tRNA-cmnm(5)s(2)U34.</text>
</comment>
<comment type="cofactor">
    <cofactor evidence="1">
        <name>FAD</name>
        <dbReference type="ChEBI" id="CHEBI:57692"/>
    </cofactor>
</comment>
<comment type="subunit">
    <text evidence="1">Homodimer. Heterotetramer of two MnmE and two MnmG subunits.</text>
</comment>
<comment type="subcellular location">
    <subcellularLocation>
        <location evidence="1">Cytoplasm</location>
    </subcellularLocation>
</comment>
<comment type="similarity">
    <text evidence="1">Belongs to the MnmG family.</text>
</comment>
<evidence type="ECO:0000255" key="1">
    <source>
        <dbReference type="HAMAP-Rule" id="MF_00129"/>
    </source>
</evidence>
<keyword id="KW-0963">Cytoplasm</keyword>
<keyword id="KW-0274">FAD</keyword>
<keyword id="KW-0285">Flavoprotein</keyword>
<keyword id="KW-0520">NAD</keyword>
<keyword id="KW-0819">tRNA processing</keyword>
<feature type="chain" id="PRO_1000076319" description="tRNA uridine 5-carboxymethylaminomethyl modification enzyme MnmG">
    <location>
        <begin position="1"/>
        <end position="629"/>
    </location>
</feature>
<feature type="binding site" evidence="1">
    <location>
        <begin position="13"/>
        <end position="18"/>
    </location>
    <ligand>
        <name>FAD</name>
        <dbReference type="ChEBI" id="CHEBI:57692"/>
    </ligand>
</feature>
<feature type="binding site" evidence="1">
    <location>
        <position position="125"/>
    </location>
    <ligand>
        <name>FAD</name>
        <dbReference type="ChEBI" id="CHEBI:57692"/>
    </ligand>
</feature>
<feature type="binding site" evidence="1">
    <location>
        <position position="180"/>
    </location>
    <ligand>
        <name>FAD</name>
        <dbReference type="ChEBI" id="CHEBI:57692"/>
    </ligand>
</feature>
<feature type="binding site" evidence="1">
    <location>
        <begin position="273"/>
        <end position="287"/>
    </location>
    <ligand>
        <name>NAD(+)</name>
        <dbReference type="ChEBI" id="CHEBI:57540"/>
    </ligand>
</feature>
<feature type="binding site" evidence="1">
    <location>
        <position position="370"/>
    </location>
    <ligand>
        <name>FAD</name>
        <dbReference type="ChEBI" id="CHEBI:57692"/>
    </ligand>
</feature>
<accession>B0UWH3</accession>
<name>MNMG_HISS2</name>
<proteinExistence type="inferred from homology"/>
<dbReference type="EMBL" id="CP000947">
    <property type="protein sequence ID" value="ACA31647.1"/>
    <property type="molecule type" value="Genomic_DNA"/>
</dbReference>
<dbReference type="RefSeq" id="WP_012340948.1">
    <property type="nucleotide sequence ID" value="NC_010519.1"/>
</dbReference>
<dbReference type="SMR" id="B0UWH3"/>
<dbReference type="STRING" id="228400.HSM_1858"/>
<dbReference type="GeneID" id="31488166"/>
<dbReference type="KEGG" id="hsm:HSM_1858"/>
<dbReference type="HOGENOM" id="CLU_007831_2_2_6"/>
<dbReference type="GO" id="GO:0005829">
    <property type="term" value="C:cytosol"/>
    <property type="evidence" value="ECO:0007669"/>
    <property type="project" value="TreeGrafter"/>
</dbReference>
<dbReference type="GO" id="GO:0050660">
    <property type="term" value="F:flavin adenine dinucleotide binding"/>
    <property type="evidence" value="ECO:0007669"/>
    <property type="project" value="UniProtKB-UniRule"/>
</dbReference>
<dbReference type="GO" id="GO:0030488">
    <property type="term" value="P:tRNA methylation"/>
    <property type="evidence" value="ECO:0007669"/>
    <property type="project" value="TreeGrafter"/>
</dbReference>
<dbReference type="GO" id="GO:0002098">
    <property type="term" value="P:tRNA wobble uridine modification"/>
    <property type="evidence" value="ECO:0007669"/>
    <property type="project" value="InterPro"/>
</dbReference>
<dbReference type="FunFam" id="1.10.10.1800:FF:000001">
    <property type="entry name" value="tRNA uridine 5-carboxymethylaminomethyl modification enzyme MnmG"/>
    <property type="match status" value="1"/>
</dbReference>
<dbReference type="FunFam" id="1.10.150.570:FF:000001">
    <property type="entry name" value="tRNA uridine 5-carboxymethylaminomethyl modification enzyme MnmG"/>
    <property type="match status" value="1"/>
</dbReference>
<dbReference type="FunFam" id="3.50.50.60:FF:000002">
    <property type="entry name" value="tRNA uridine 5-carboxymethylaminomethyl modification enzyme MnmG"/>
    <property type="match status" value="1"/>
</dbReference>
<dbReference type="FunFam" id="3.50.50.60:FF:000010">
    <property type="entry name" value="tRNA uridine 5-carboxymethylaminomethyl modification enzyme MnmG"/>
    <property type="match status" value="1"/>
</dbReference>
<dbReference type="Gene3D" id="3.50.50.60">
    <property type="entry name" value="FAD/NAD(P)-binding domain"/>
    <property type="match status" value="2"/>
</dbReference>
<dbReference type="Gene3D" id="1.10.150.570">
    <property type="entry name" value="GidA associated domain, C-terminal subdomain"/>
    <property type="match status" value="1"/>
</dbReference>
<dbReference type="Gene3D" id="1.10.10.1800">
    <property type="entry name" value="tRNA uridine 5-carboxymethylaminomethyl modification enzyme MnmG/GidA"/>
    <property type="match status" value="1"/>
</dbReference>
<dbReference type="HAMAP" id="MF_00129">
    <property type="entry name" value="MnmG_GidA"/>
    <property type="match status" value="1"/>
</dbReference>
<dbReference type="InterPro" id="IPR036188">
    <property type="entry name" value="FAD/NAD-bd_sf"/>
</dbReference>
<dbReference type="InterPro" id="IPR049312">
    <property type="entry name" value="GIDA_C_N"/>
</dbReference>
<dbReference type="InterPro" id="IPR004416">
    <property type="entry name" value="MnmG"/>
</dbReference>
<dbReference type="InterPro" id="IPR002218">
    <property type="entry name" value="MnmG-rel"/>
</dbReference>
<dbReference type="InterPro" id="IPR020595">
    <property type="entry name" value="MnmG-rel_CS"/>
</dbReference>
<dbReference type="InterPro" id="IPR026904">
    <property type="entry name" value="MnmG_C"/>
</dbReference>
<dbReference type="InterPro" id="IPR047001">
    <property type="entry name" value="MnmG_C_subdom"/>
</dbReference>
<dbReference type="InterPro" id="IPR044920">
    <property type="entry name" value="MnmG_C_subdom_sf"/>
</dbReference>
<dbReference type="InterPro" id="IPR040131">
    <property type="entry name" value="MnmG_N"/>
</dbReference>
<dbReference type="NCBIfam" id="TIGR00136">
    <property type="entry name" value="mnmG_gidA"/>
    <property type="match status" value="1"/>
</dbReference>
<dbReference type="PANTHER" id="PTHR11806">
    <property type="entry name" value="GLUCOSE INHIBITED DIVISION PROTEIN A"/>
    <property type="match status" value="1"/>
</dbReference>
<dbReference type="PANTHER" id="PTHR11806:SF0">
    <property type="entry name" value="PROTEIN MTO1 HOMOLOG, MITOCHONDRIAL"/>
    <property type="match status" value="1"/>
</dbReference>
<dbReference type="Pfam" id="PF01134">
    <property type="entry name" value="GIDA"/>
    <property type="match status" value="1"/>
</dbReference>
<dbReference type="Pfam" id="PF21680">
    <property type="entry name" value="GIDA_C_1st"/>
    <property type="match status" value="1"/>
</dbReference>
<dbReference type="Pfam" id="PF13932">
    <property type="entry name" value="SAM_GIDA_C"/>
    <property type="match status" value="1"/>
</dbReference>
<dbReference type="SMART" id="SM01228">
    <property type="entry name" value="GIDA_assoc_3"/>
    <property type="match status" value="1"/>
</dbReference>
<dbReference type="SUPFAM" id="SSF51905">
    <property type="entry name" value="FAD/NAD(P)-binding domain"/>
    <property type="match status" value="1"/>
</dbReference>
<dbReference type="PROSITE" id="PS01280">
    <property type="entry name" value="GIDA_1"/>
    <property type="match status" value="1"/>
</dbReference>
<dbReference type="PROSITE" id="PS01281">
    <property type="entry name" value="GIDA_2"/>
    <property type="match status" value="1"/>
</dbReference>
<sequence>MFYTENYDVIVIGGGHAGTEAALATARMKLKTLLLTHNIDTLGQMSCNPAIGGIGKGHLVKEIDAMGGLMATAADKAGIQFRTLNSSKGPAVRATRAQADRVLYRQVVRIALENQPNLDIFQQEVTDIILEKDSIAGVETKMGLKFRAKSVVLTAGTFLAGKIHIGLENYAGGRAGDPASVNLAKKLRDLNLRVNRLKTGTPPRIDARTINFDILAKQYGDEKLPVFSFMGSVEQHPEQIPCYITHTNDQTHDVIRKNLDRSPMYTGVIEGIGPRYCPSIEDKVIRFSDRNSHQIYLEPEGLTSNEVYPNGISTSLPFDVQMKIVNSMKGLEKARIVKPGYAIEYDYFDPRDLKPTLETKAISGLFFAGQINGTTGYEEAAAQGLLAGINAGLFVQEKESWFPRRDQAYIGVLVDDLCTVGTKEPYRVFTSRAEYRLLLREDNADIRLTSIARELGLIDDIRWARFNQKMENIELERQRLRSIWLHPRSEYLNEANEILKSPLVREVNGEDLLRRPEINYQILTALTPFKPAMEDKEAVEQVEIAIKYQGYIEHQQEEIERQKRHENTAIPANFDYKNISGLSNEVCAKLEQYRPISIGQASRISGITPAAISILLVNLKKQGMLKRGE</sequence>